<sequence>MIDKRDDKPFKLKSKYKPSGDQPQAIESLVDNIEGGEKAQILLGATGTGKTYTMSQVISKVNKPTLVIAHNKTLAGQLYGEFKEFFPDNAVEYFVSYYDYYQPEAYVPSSDTYIEKDSSVNDEIDKLRHSATSSLLERNDVIVVASVSCIYGLGSPKEYADSAVSLRPGQEISRDTLLNQLVDIQFERNDIDFQRGCFRVRGDVVEVFPASRDEHAFRVEFFGDEIDRICEIESLTGKTIGEVDHLVLFPATHFVTNDEHMEQSIAKIQAELAEQLQLFESEGKLLEAQRLRQRTEYDIEMLREMGYTSGVENYSRHMDGRLPGEPPYTLLDFFPEDFLIMIDESHMTMGQIKGMYNGDQARKQMLVDYGFRLPSALDNRPLRREEFESHVHQIVYVSATPGEYEMSQTNTIIEQIIRPTGLLDPEIDVRPSMGQMDDLLGEINQRVARDERTFITTLTKKMAEDLTDYLKEMGVKVKYMHSDIKTLERTEIIRDLRLGVFDVLIGINLLREGIDVPEVSLVAILDADKEGFLRNERGLIQTIGRAARNVDGHVIMYADKMTDSMQRAIDETARRREIQIAYNKAHGIVPQTIKKDIRGLISISKTSHNDISKEEMDYESMSRGERKEAINALQKQMQEAAELLDFELAAQMRDLILELKLMD</sequence>
<protein>
    <recommendedName>
        <fullName evidence="1">UvrABC system protein B</fullName>
        <shortName evidence="1">Protein UvrB</shortName>
    </recommendedName>
    <alternativeName>
        <fullName evidence="1">Excinuclease ABC subunit B</fullName>
    </alternativeName>
</protein>
<organism>
    <name type="scientific">Streptococcus pyogenes serotype M6 (strain ATCC BAA-946 / MGAS10394)</name>
    <dbReference type="NCBI Taxonomy" id="286636"/>
    <lineage>
        <taxon>Bacteria</taxon>
        <taxon>Bacillati</taxon>
        <taxon>Bacillota</taxon>
        <taxon>Bacilli</taxon>
        <taxon>Lactobacillales</taxon>
        <taxon>Streptococcaceae</taxon>
        <taxon>Streptococcus</taxon>
    </lineage>
</organism>
<reference key="1">
    <citation type="journal article" date="2004" name="J. Infect. Dis.">
        <title>Progress toward characterization of the group A Streptococcus metagenome: complete genome sequence of a macrolide-resistant serotype M6 strain.</title>
        <authorList>
            <person name="Banks D.J."/>
            <person name="Porcella S.F."/>
            <person name="Barbian K.D."/>
            <person name="Beres S.B."/>
            <person name="Philips L.E."/>
            <person name="Voyich J.M."/>
            <person name="DeLeo F.R."/>
            <person name="Martin J.M."/>
            <person name="Somerville G.A."/>
            <person name="Musser J.M."/>
        </authorList>
    </citation>
    <scope>NUCLEOTIDE SEQUENCE [LARGE SCALE GENOMIC DNA]</scope>
    <source>
        <strain>ATCC BAA-946 / MGAS10394</strain>
    </source>
</reference>
<dbReference type="EMBL" id="CP000003">
    <property type="protein sequence ID" value="AAT87179.1"/>
    <property type="molecule type" value="Genomic_DNA"/>
</dbReference>
<dbReference type="RefSeq" id="WP_011184623.1">
    <property type="nucleotide sequence ID" value="NC_006086.1"/>
</dbReference>
<dbReference type="SMR" id="Q5XBN4"/>
<dbReference type="KEGG" id="spa:M6_Spy1044"/>
<dbReference type="HOGENOM" id="CLU_009621_2_1_9"/>
<dbReference type="Proteomes" id="UP000001167">
    <property type="component" value="Chromosome"/>
</dbReference>
<dbReference type="GO" id="GO:0005737">
    <property type="term" value="C:cytoplasm"/>
    <property type="evidence" value="ECO:0007669"/>
    <property type="project" value="UniProtKB-SubCell"/>
</dbReference>
<dbReference type="GO" id="GO:0009380">
    <property type="term" value="C:excinuclease repair complex"/>
    <property type="evidence" value="ECO:0007669"/>
    <property type="project" value="InterPro"/>
</dbReference>
<dbReference type="GO" id="GO:0005524">
    <property type="term" value="F:ATP binding"/>
    <property type="evidence" value="ECO:0007669"/>
    <property type="project" value="UniProtKB-UniRule"/>
</dbReference>
<dbReference type="GO" id="GO:0016887">
    <property type="term" value="F:ATP hydrolysis activity"/>
    <property type="evidence" value="ECO:0007669"/>
    <property type="project" value="InterPro"/>
</dbReference>
<dbReference type="GO" id="GO:0003677">
    <property type="term" value="F:DNA binding"/>
    <property type="evidence" value="ECO:0007669"/>
    <property type="project" value="UniProtKB-UniRule"/>
</dbReference>
<dbReference type="GO" id="GO:0009381">
    <property type="term" value="F:excinuclease ABC activity"/>
    <property type="evidence" value="ECO:0007669"/>
    <property type="project" value="UniProtKB-UniRule"/>
</dbReference>
<dbReference type="GO" id="GO:0006289">
    <property type="term" value="P:nucleotide-excision repair"/>
    <property type="evidence" value="ECO:0007669"/>
    <property type="project" value="UniProtKB-UniRule"/>
</dbReference>
<dbReference type="GO" id="GO:0009432">
    <property type="term" value="P:SOS response"/>
    <property type="evidence" value="ECO:0007669"/>
    <property type="project" value="UniProtKB-UniRule"/>
</dbReference>
<dbReference type="CDD" id="cd17916">
    <property type="entry name" value="DEXHc_UvrB"/>
    <property type="match status" value="1"/>
</dbReference>
<dbReference type="CDD" id="cd18790">
    <property type="entry name" value="SF2_C_UvrB"/>
    <property type="match status" value="1"/>
</dbReference>
<dbReference type="Gene3D" id="3.40.50.300">
    <property type="entry name" value="P-loop containing nucleotide triphosphate hydrolases"/>
    <property type="match status" value="3"/>
</dbReference>
<dbReference type="Gene3D" id="4.10.860.10">
    <property type="entry name" value="UVR domain"/>
    <property type="match status" value="1"/>
</dbReference>
<dbReference type="HAMAP" id="MF_00204">
    <property type="entry name" value="UvrB"/>
    <property type="match status" value="1"/>
</dbReference>
<dbReference type="InterPro" id="IPR006935">
    <property type="entry name" value="Helicase/UvrB_N"/>
</dbReference>
<dbReference type="InterPro" id="IPR014001">
    <property type="entry name" value="Helicase_ATP-bd"/>
</dbReference>
<dbReference type="InterPro" id="IPR001650">
    <property type="entry name" value="Helicase_C-like"/>
</dbReference>
<dbReference type="InterPro" id="IPR027417">
    <property type="entry name" value="P-loop_NTPase"/>
</dbReference>
<dbReference type="InterPro" id="IPR001943">
    <property type="entry name" value="UVR_dom"/>
</dbReference>
<dbReference type="InterPro" id="IPR036876">
    <property type="entry name" value="UVR_dom_sf"/>
</dbReference>
<dbReference type="InterPro" id="IPR004807">
    <property type="entry name" value="UvrB"/>
</dbReference>
<dbReference type="InterPro" id="IPR041471">
    <property type="entry name" value="UvrB_inter"/>
</dbReference>
<dbReference type="InterPro" id="IPR024759">
    <property type="entry name" value="UvrB_YAD/RRR_dom"/>
</dbReference>
<dbReference type="NCBIfam" id="NF003673">
    <property type="entry name" value="PRK05298.1"/>
    <property type="match status" value="1"/>
</dbReference>
<dbReference type="NCBIfam" id="TIGR00631">
    <property type="entry name" value="uvrb"/>
    <property type="match status" value="1"/>
</dbReference>
<dbReference type="PANTHER" id="PTHR24029">
    <property type="entry name" value="UVRABC SYSTEM PROTEIN B"/>
    <property type="match status" value="1"/>
</dbReference>
<dbReference type="PANTHER" id="PTHR24029:SF0">
    <property type="entry name" value="UVRABC SYSTEM PROTEIN B"/>
    <property type="match status" value="1"/>
</dbReference>
<dbReference type="Pfam" id="PF00271">
    <property type="entry name" value="Helicase_C"/>
    <property type="match status" value="1"/>
</dbReference>
<dbReference type="Pfam" id="PF04851">
    <property type="entry name" value="ResIII"/>
    <property type="match status" value="1"/>
</dbReference>
<dbReference type="Pfam" id="PF02151">
    <property type="entry name" value="UVR"/>
    <property type="match status" value="1"/>
</dbReference>
<dbReference type="Pfam" id="PF12344">
    <property type="entry name" value="UvrB"/>
    <property type="match status" value="1"/>
</dbReference>
<dbReference type="Pfam" id="PF17757">
    <property type="entry name" value="UvrB_inter"/>
    <property type="match status" value="1"/>
</dbReference>
<dbReference type="SMART" id="SM00487">
    <property type="entry name" value="DEXDc"/>
    <property type="match status" value="1"/>
</dbReference>
<dbReference type="SMART" id="SM00490">
    <property type="entry name" value="HELICc"/>
    <property type="match status" value="1"/>
</dbReference>
<dbReference type="SUPFAM" id="SSF46600">
    <property type="entry name" value="C-terminal UvrC-binding domain of UvrB"/>
    <property type="match status" value="1"/>
</dbReference>
<dbReference type="SUPFAM" id="SSF52540">
    <property type="entry name" value="P-loop containing nucleoside triphosphate hydrolases"/>
    <property type="match status" value="2"/>
</dbReference>
<dbReference type="PROSITE" id="PS51192">
    <property type="entry name" value="HELICASE_ATP_BIND_1"/>
    <property type="match status" value="1"/>
</dbReference>
<dbReference type="PROSITE" id="PS51194">
    <property type="entry name" value="HELICASE_CTER"/>
    <property type="match status" value="1"/>
</dbReference>
<dbReference type="PROSITE" id="PS50151">
    <property type="entry name" value="UVR"/>
    <property type="match status" value="1"/>
</dbReference>
<name>UVRB_STRP6</name>
<keyword id="KW-0067">ATP-binding</keyword>
<keyword id="KW-0963">Cytoplasm</keyword>
<keyword id="KW-0227">DNA damage</keyword>
<keyword id="KW-0228">DNA excision</keyword>
<keyword id="KW-0234">DNA repair</keyword>
<keyword id="KW-0267">Excision nuclease</keyword>
<keyword id="KW-0547">Nucleotide-binding</keyword>
<keyword id="KW-0742">SOS response</keyword>
<accession>Q5XBN4</accession>
<feature type="chain" id="PRO_0000138436" description="UvrABC system protein B">
    <location>
        <begin position="1"/>
        <end position="663"/>
    </location>
</feature>
<feature type="domain" description="Helicase ATP-binding" evidence="1">
    <location>
        <begin position="31"/>
        <end position="418"/>
    </location>
</feature>
<feature type="domain" description="Helicase C-terminal" evidence="1">
    <location>
        <begin position="435"/>
        <end position="601"/>
    </location>
</feature>
<feature type="domain" description="UVR" evidence="1">
    <location>
        <begin position="627"/>
        <end position="662"/>
    </location>
</feature>
<feature type="region of interest" description="Disordered" evidence="2">
    <location>
        <begin position="1"/>
        <end position="23"/>
    </location>
</feature>
<feature type="short sequence motif" description="Beta-hairpin">
    <location>
        <begin position="97"/>
        <end position="120"/>
    </location>
</feature>
<feature type="compositionally biased region" description="Basic and acidic residues" evidence="2">
    <location>
        <begin position="1"/>
        <end position="10"/>
    </location>
</feature>
<feature type="binding site" evidence="1">
    <location>
        <begin position="44"/>
        <end position="51"/>
    </location>
    <ligand>
        <name>ATP</name>
        <dbReference type="ChEBI" id="CHEBI:30616"/>
    </ligand>
</feature>
<evidence type="ECO:0000255" key="1">
    <source>
        <dbReference type="HAMAP-Rule" id="MF_00204"/>
    </source>
</evidence>
<evidence type="ECO:0000256" key="2">
    <source>
        <dbReference type="SAM" id="MobiDB-lite"/>
    </source>
</evidence>
<comment type="function">
    <text evidence="1">The UvrABC repair system catalyzes the recognition and processing of DNA lesions. A damage recognition complex composed of 2 UvrA and 2 UvrB subunits scans DNA for abnormalities. Upon binding of the UvrA(2)B(2) complex to a putative damaged site, the DNA wraps around one UvrB monomer. DNA wrap is dependent on ATP binding by UvrB and probably causes local melting of the DNA helix, facilitating insertion of UvrB beta-hairpin between the DNA strands. Then UvrB probes one DNA strand for the presence of a lesion. If a lesion is found the UvrA subunits dissociate and the UvrB-DNA preincision complex is formed. This complex is subsequently bound by UvrC and the second UvrB is released. If no lesion is found, the DNA wraps around the other UvrB subunit that will check the other stand for damage.</text>
</comment>
<comment type="subunit">
    <text evidence="1">Forms a heterotetramer with UvrA during the search for lesions. Interacts with UvrC in an incision complex.</text>
</comment>
<comment type="subcellular location">
    <subcellularLocation>
        <location evidence="1">Cytoplasm</location>
    </subcellularLocation>
</comment>
<comment type="domain">
    <text evidence="1">The beta-hairpin motif is involved in DNA binding.</text>
</comment>
<comment type="similarity">
    <text evidence="1">Belongs to the UvrB family.</text>
</comment>
<gene>
    <name evidence="1" type="primary">uvrB</name>
    <name type="ordered locus">M6_Spy1044</name>
</gene>
<proteinExistence type="inferred from homology"/>